<name>YAEP_ECOLU</name>
<comment type="similarity">
    <text evidence="1">Belongs to the UPF0253 family.</text>
</comment>
<sequence>MEKYCELIRKRYAEIASGDLGYVPDALGCVLKVLNEMAADDALSEAVREKAAYAAANLLVSDYVNE</sequence>
<protein>
    <recommendedName>
        <fullName evidence="1">UPF0253 protein YaeP</fullName>
    </recommendedName>
</protein>
<dbReference type="EMBL" id="CU928163">
    <property type="protein sequence ID" value="CAR11407.1"/>
    <property type="molecule type" value="Genomic_DNA"/>
</dbReference>
<dbReference type="RefSeq" id="WP_000417058.1">
    <property type="nucleotide sequence ID" value="NC_011751.1"/>
</dbReference>
<dbReference type="RefSeq" id="YP_002410963.1">
    <property type="nucleotide sequence ID" value="NC_011751.1"/>
</dbReference>
<dbReference type="SMR" id="B7N857"/>
<dbReference type="STRING" id="585056.ECUMN_0187"/>
<dbReference type="KEGG" id="eum:ECUMN_0187"/>
<dbReference type="PATRIC" id="fig|585056.7.peg.381"/>
<dbReference type="HOGENOM" id="CLU_190008_0_0_6"/>
<dbReference type="Proteomes" id="UP000007097">
    <property type="component" value="Chromosome"/>
</dbReference>
<dbReference type="HAMAP" id="MF_01064">
    <property type="entry name" value="UPF0253"/>
    <property type="match status" value="1"/>
</dbReference>
<dbReference type="InterPro" id="IPR009624">
    <property type="entry name" value="UPF0253"/>
</dbReference>
<dbReference type="NCBIfam" id="NF003436">
    <property type="entry name" value="PRK04964.1"/>
    <property type="match status" value="1"/>
</dbReference>
<dbReference type="Pfam" id="PF06786">
    <property type="entry name" value="UPF0253"/>
    <property type="match status" value="1"/>
</dbReference>
<gene>
    <name evidence="1" type="primary">yaeP</name>
    <name type="ordered locus">ECUMN_0187</name>
</gene>
<proteinExistence type="inferred from homology"/>
<feature type="chain" id="PRO_1000136537" description="UPF0253 protein YaeP">
    <location>
        <begin position="1"/>
        <end position="66"/>
    </location>
</feature>
<evidence type="ECO:0000255" key="1">
    <source>
        <dbReference type="HAMAP-Rule" id="MF_01064"/>
    </source>
</evidence>
<accession>B7N857</accession>
<organism>
    <name type="scientific">Escherichia coli O17:K52:H18 (strain UMN026 / ExPEC)</name>
    <dbReference type="NCBI Taxonomy" id="585056"/>
    <lineage>
        <taxon>Bacteria</taxon>
        <taxon>Pseudomonadati</taxon>
        <taxon>Pseudomonadota</taxon>
        <taxon>Gammaproteobacteria</taxon>
        <taxon>Enterobacterales</taxon>
        <taxon>Enterobacteriaceae</taxon>
        <taxon>Escherichia</taxon>
    </lineage>
</organism>
<reference key="1">
    <citation type="journal article" date="2009" name="PLoS Genet.">
        <title>Organised genome dynamics in the Escherichia coli species results in highly diverse adaptive paths.</title>
        <authorList>
            <person name="Touchon M."/>
            <person name="Hoede C."/>
            <person name="Tenaillon O."/>
            <person name="Barbe V."/>
            <person name="Baeriswyl S."/>
            <person name="Bidet P."/>
            <person name="Bingen E."/>
            <person name="Bonacorsi S."/>
            <person name="Bouchier C."/>
            <person name="Bouvet O."/>
            <person name="Calteau A."/>
            <person name="Chiapello H."/>
            <person name="Clermont O."/>
            <person name="Cruveiller S."/>
            <person name="Danchin A."/>
            <person name="Diard M."/>
            <person name="Dossat C."/>
            <person name="Karoui M.E."/>
            <person name="Frapy E."/>
            <person name="Garry L."/>
            <person name="Ghigo J.M."/>
            <person name="Gilles A.M."/>
            <person name="Johnson J."/>
            <person name="Le Bouguenec C."/>
            <person name="Lescat M."/>
            <person name="Mangenot S."/>
            <person name="Martinez-Jehanne V."/>
            <person name="Matic I."/>
            <person name="Nassif X."/>
            <person name="Oztas S."/>
            <person name="Petit M.A."/>
            <person name="Pichon C."/>
            <person name="Rouy Z."/>
            <person name="Ruf C.S."/>
            <person name="Schneider D."/>
            <person name="Tourret J."/>
            <person name="Vacherie B."/>
            <person name="Vallenet D."/>
            <person name="Medigue C."/>
            <person name="Rocha E.P.C."/>
            <person name="Denamur E."/>
        </authorList>
    </citation>
    <scope>NUCLEOTIDE SEQUENCE [LARGE SCALE GENOMIC DNA]</scope>
    <source>
        <strain>UMN026 / ExPEC</strain>
    </source>
</reference>